<protein>
    <recommendedName>
        <fullName evidence="1">FMN reductase (NADH) RutF</fullName>
        <ecNumber evidence="1">1.5.1.42</ecNumber>
    </recommendedName>
    <alternativeName>
        <fullName evidence="1">FMN reductase</fullName>
    </alternativeName>
    <alternativeName>
        <fullName evidence="1">NADH-flavin reductase RutF</fullName>
    </alternativeName>
    <alternativeName>
        <fullName evidence="1">NADH:flavin oxidoreductase</fullName>
    </alternativeName>
</protein>
<comment type="function">
    <text evidence="1">Catalyzes the reduction of FMN to FMNH2 which is used to reduce pyrimidine by RutA via the Rut pathway.</text>
</comment>
<comment type="catalytic activity">
    <reaction evidence="1">
        <text>FMNH2 + NAD(+) = FMN + NADH + 2 H(+)</text>
        <dbReference type="Rhea" id="RHEA:21620"/>
        <dbReference type="ChEBI" id="CHEBI:15378"/>
        <dbReference type="ChEBI" id="CHEBI:57540"/>
        <dbReference type="ChEBI" id="CHEBI:57618"/>
        <dbReference type="ChEBI" id="CHEBI:57945"/>
        <dbReference type="ChEBI" id="CHEBI:58210"/>
        <dbReference type="EC" id="1.5.1.42"/>
    </reaction>
</comment>
<comment type="similarity">
    <text evidence="1">Belongs to the non-flavoprotein flavin reductase family. RutF subfamily.</text>
</comment>
<name>RUTF_CROTZ</name>
<sequence length="166" mass="17756">MSEQQAFRDAMSRLGAAVNIVTTDGPAGMAGFTASAVCSVTDSPPTLLVCLNRNASVWPVFQANGQLCVNTLAAGHEALSGLFGGKTPMEERFAAARWRRGVTGSPQLDGAVVSFDCRVEQVVPVSTHDVLLCRVLEITRNDDTHGLVWFDRHYHALSRPVCGLAS</sequence>
<feature type="chain" id="PRO_0000402993" description="FMN reductase (NADH) RutF">
    <location>
        <begin position="1"/>
        <end position="166"/>
    </location>
</feature>
<gene>
    <name evidence="1" type="primary">rutF</name>
    <name type="ordered locus">Ctu_15880</name>
</gene>
<organism>
    <name type="scientific">Cronobacter turicensis (strain DSM 18703 / CCUG 55852 / LMG 23827 / z3032)</name>
    <dbReference type="NCBI Taxonomy" id="693216"/>
    <lineage>
        <taxon>Bacteria</taxon>
        <taxon>Pseudomonadati</taxon>
        <taxon>Pseudomonadota</taxon>
        <taxon>Gammaproteobacteria</taxon>
        <taxon>Enterobacterales</taxon>
        <taxon>Enterobacteriaceae</taxon>
        <taxon>Cronobacter</taxon>
    </lineage>
</organism>
<dbReference type="EC" id="1.5.1.42" evidence="1"/>
<dbReference type="EMBL" id="FN543093">
    <property type="protein sequence ID" value="CBA29787.1"/>
    <property type="molecule type" value="Genomic_DNA"/>
</dbReference>
<dbReference type="SMR" id="C9Y0S2"/>
<dbReference type="KEGG" id="ctu:CTU_15880"/>
<dbReference type="PATRIC" id="fig|693216.3.peg.1513"/>
<dbReference type="HOGENOM" id="CLU_059021_2_2_6"/>
<dbReference type="Proteomes" id="UP000002069">
    <property type="component" value="Chromosome"/>
</dbReference>
<dbReference type="GO" id="GO:0010181">
    <property type="term" value="F:FMN binding"/>
    <property type="evidence" value="ECO:0007669"/>
    <property type="project" value="InterPro"/>
</dbReference>
<dbReference type="GO" id="GO:0052874">
    <property type="term" value="F:FMN reductase (NADH) activity"/>
    <property type="evidence" value="ECO:0007669"/>
    <property type="project" value="UniProtKB-EC"/>
</dbReference>
<dbReference type="GO" id="GO:0008752">
    <property type="term" value="F:FMN reductase [NAD(P)H] activity"/>
    <property type="evidence" value="ECO:0007669"/>
    <property type="project" value="InterPro"/>
</dbReference>
<dbReference type="GO" id="GO:0042602">
    <property type="term" value="F:riboflavin reductase (NADPH) activity"/>
    <property type="evidence" value="ECO:0007669"/>
    <property type="project" value="UniProtKB-UniRule"/>
</dbReference>
<dbReference type="GO" id="GO:0019740">
    <property type="term" value="P:nitrogen utilization"/>
    <property type="evidence" value="ECO:0007669"/>
    <property type="project" value="UniProtKB-UniRule"/>
</dbReference>
<dbReference type="GO" id="GO:0006212">
    <property type="term" value="P:uracil catabolic process"/>
    <property type="evidence" value="ECO:0007669"/>
    <property type="project" value="UniProtKB-UniRule"/>
</dbReference>
<dbReference type="FunFam" id="2.30.110.10:FF:000002">
    <property type="entry name" value="FMN reductase (NADH) RutF"/>
    <property type="match status" value="1"/>
</dbReference>
<dbReference type="Gene3D" id="2.30.110.10">
    <property type="entry name" value="Electron Transport, Fmn-binding Protein, Chain A"/>
    <property type="match status" value="1"/>
</dbReference>
<dbReference type="HAMAP" id="MF_00833">
    <property type="entry name" value="RutF"/>
    <property type="match status" value="1"/>
</dbReference>
<dbReference type="InterPro" id="IPR002563">
    <property type="entry name" value="Flavin_Rdtase-like_dom"/>
</dbReference>
<dbReference type="InterPro" id="IPR050268">
    <property type="entry name" value="NADH-dep_flavin_reductase"/>
</dbReference>
<dbReference type="InterPro" id="IPR019917">
    <property type="entry name" value="RutF"/>
</dbReference>
<dbReference type="InterPro" id="IPR012349">
    <property type="entry name" value="Split_barrel_FMN-bd"/>
</dbReference>
<dbReference type="NCBIfam" id="TIGR03615">
    <property type="entry name" value="RutF"/>
    <property type="match status" value="1"/>
</dbReference>
<dbReference type="PANTHER" id="PTHR30466">
    <property type="entry name" value="FLAVIN REDUCTASE"/>
    <property type="match status" value="1"/>
</dbReference>
<dbReference type="PANTHER" id="PTHR30466:SF1">
    <property type="entry name" value="FMN REDUCTASE (NADH) RUTF"/>
    <property type="match status" value="1"/>
</dbReference>
<dbReference type="Pfam" id="PF01613">
    <property type="entry name" value="Flavin_Reduct"/>
    <property type="match status" value="1"/>
</dbReference>
<dbReference type="SMART" id="SM00903">
    <property type="entry name" value="Flavin_Reduct"/>
    <property type="match status" value="1"/>
</dbReference>
<dbReference type="SUPFAM" id="SSF50475">
    <property type="entry name" value="FMN-binding split barrel"/>
    <property type="match status" value="1"/>
</dbReference>
<proteinExistence type="inferred from homology"/>
<accession>C9Y0S2</accession>
<keyword id="KW-0285">Flavoprotein</keyword>
<keyword id="KW-0288">FMN</keyword>
<keyword id="KW-0520">NAD</keyword>
<keyword id="KW-0560">Oxidoreductase</keyword>
<evidence type="ECO:0000255" key="1">
    <source>
        <dbReference type="HAMAP-Rule" id="MF_00833"/>
    </source>
</evidence>
<reference key="1">
    <citation type="journal article" date="2011" name="J. Bacteriol.">
        <title>Complete genome sequence of Cronobacter turicensis LMG 23827, a food-borne pathogen causing deaths in neonates.</title>
        <authorList>
            <person name="Stephan R."/>
            <person name="Lehner A."/>
            <person name="Tischler P."/>
            <person name="Rattei T."/>
        </authorList>
    </citation>
    <scope>NUCLEOTIDE SEQUENCE [LARGE SCALE GENOMIC DNA]</scope>
    <source>
        <strain>DSM 18703 / CCUG 55852 / LMG 23827 / z3032</strain>
    </source>
</reference>